<keyword id="KW-0032">Aminotransferase</keyword>
<keyword id="KW-0045">Antibiotic biosynthesis</keyword>
<keyword id="KW-0663">Pyridoxal phosphate</keyword>
<keyword id="KW-0808">Transferase</keyword>
<evidence type="ECO:0000250" key="1"/>
<evidence type="ECO:0000256" key="2">
    <source>
        <dbReference type="SAM" id="MobiDB-lite"/>
    </source>
</evidence>
<evidence type="ECO:0000269" key="3">
    <source>
    </source>
</evidence>
<evidence type="ECO:0000269" key="4">
    <source>
    </source>
</evidence>
<evidence type="ECO:0000305" key="5"/>
<organism>
    <name type="scientific">Streptomyces kanamyceticus</name>
    <dbReference type="NCBI Taxonomy" id="1967"/>
    <lineage>
        <taxon>Bacteria</taxon>
        <taxon>Bacillati</taxon>
        <taxon>Actinomycetota</taxon>
        <taxon>Actinomycetes</taxon>
        <taxon>Kitasatosporales</taxon>
        <taxon>Streptomycetaceae</taxon>
        <taxon>Streptomyces</taxon>
    </lineage>
</organism>
<gene>
    <name type="primary">kanB</name>
    <name type="synonym">kanS1</name>
</gene>
<accession>Q6L739</accession>
<sequence>MPLQSSRLAVDNGTPVRGKPWPVWPQPTDGTLDALSRVLRSGRWAISGPYRGVESAERRFARRFADYHRIAHCVPASSGTASLMLALEACGVGAGDEVILPGVTWVASASTVVGVNAVPVFADIDPDTLCLDPDAVEAAITPATKAIVVVHLYAAVADLTRLKEVADRHGIVLIEDCAQAHGAEFEGHKVGTFGAVGTFSMQQSKVLTSGEGGAAITADPVLARRMEHLRADGRCYRDQAPPSGHMELVETGELMGSNRCISEFQAAVLTEQLGELDRFNALRRHNAELLDALLTDVGYRPQRSTPGTTARTYYTYVAELPDAELPGADITKVTEALTAELGFPVAPAYSPLNANPLYDPASRSRFALGPQHEKLIDPARFVLPVSGRLTRRLVTFHHAALLGDESDMRDIAEAFTKVLQHRAVLAA</sequence>
<reference key="1">
    <citation type="journal article" date="2004" name="Arch. Biochem. Biophys.">
        <title>A gene cluster for biosynthesis of kanamycin from Streptomyces kanamyceticus: comparison with gentamicin biosynthetic gene cluster.</title>
        <authorList>
            <person name="Kharel M.K."/>
            <person name="Subba B."/>
            <person name="Basnet D.B."/>
            <person name="Woo J.S."/>
            <person name="Lee H.C."/>
            <person name="Liou K."/>
            <person name="Sohng J.K."/>
        </authorList>
    </citation>
    <scope>NUCLEOTIDE SEQUENCE [GENOMIC DNA]</scope>
    <source>
        <strain>ATCC 12853 / DSM 40500 / NBRC 13414 / NCIMB 9343 / NRRL B-2535 / VKM Ac-837</strain>
    </source>
</reference>
<reference key="2">
    <citation type="journal article" date="2004" name="J. Antibiot.">
        <title>The kanamycin biosynthetic gene cluster from Streptomyces kanamyceticus.</title>
        <authorList>
            <person name="Yanai K."/>
            <person name="Murakami T."/>
        </authorList>
    </citation>
    <scope>NUCLEOTIDE SEQUENCE [GENOMIC DNA]</scope>
    <source>
        <strain>21-18</strain>
    </source>
</reference>
<reference key="3">
    <citation type="submission" date="2004-02" db="EMBL/GenBank/DDBJ databases">
        <title>Cloning and sequencing of the kanamycin biosynthetic gene cluster from Streptomyces kanamyceticus DSM 40500.</title>
        <authorList>
            <person name="Aboshanab K.M.A."/>
            <person name="Schmidt-Beissner H."/>
            <person name="Wehmeier U.F."/>
            <person name="Welzel K."/>
            <person name="Vente A."/>
            <person name="Piepersberg W."/>
        </authorList>
    </citation>
    <scope>NUCLEOTIDE SEQUENCE [GENOMIC DNA]</scope>
    <source>
        <strain>ATCC 12853 / DSM 40500 / NBRC 13414 / NCIMB 9343 / NRRL B-2535 / VKM Ac-837</strain>
    </source>
</reference>
<reference key="4">
    <citation type="journal article" date="2009" name="Biotechnol. Lett.">
        <title>Functional characterization of kanB by complementing in engineered Streptomyces fradiae Deltaneo6::tsr.</title>
        <authorList>
            <person name="Jnawali H.N."/>
            <person name="Subba B."/>
            <person name="Liou K."/>
            <person name="Sohng J.K."/>
        </authorList>
    </citation>
    <scope>FUNCTION</scope>
    <scope>CATALYTIC ACTIVITY</scope>
    <source>
        <strain>ATCC 12853 / DSM 40500 / NBRC 13414 / NCIMB 9343 / NRRL B-2535 / VKM Ac-837</strain>
    </source>
</reference>
<reference key="5">
    <citation type="journal article" date="2011" name="Nat. Chem. Biol.">
        <title>Discovery of parallel pathways of kanamycin biosynthesis allows antibiotic manipulation.</title>
        <authorList>
            <person name="Park J.W."/>
            <person name="Park S.R."/>
            <person name="Nepal K.K."/>
            <person name="Han A.R."/>
            <person name="Ban Y.H."/>
            <person name="Yoo Y.J."/>
            <person name="Kim E.J."/>
            <person name="Kim E.M."/>
            <person name="Kim D."/>
            <person name="Sohng J.K."/>
            <person name="Yoon Y.J."/>
        </authorList>
    </citation>
    <scope>FUNCTION</scope>
    <scope>CATALYTIC ACTIVITY</scope>
</reference>
<dbReference type="EC" id="2.6.1.100" evidence="3 4"/>
<dbReference type="EC" id="2.6.1.101" evidence="3 4"/>
<dbReference type="EMBL" id="AJ582817">
    <property type="protein sequence ID" value="CAE46938.1"/>
    <property type="molecule type" value="Genomic_DNA"/>
</dbReference>
<dbReference type="EMBL" id="AB164642">
    <property type="protein sequence ID" value="BAD20758.1"/>
    <property type="molecule type" value="Genomic_DNA"/>
</dbReference>
<dbReference type="EMBL" id="AJ628422">
    <property type="protein sequence ID" value="CAF31588.1"/>
    <property type="molecule type" value="Genomic_DNA"/>
</dbReference>
<dbReference type="RefSeq" id="WP_055553821.1">
    <property type="nucleotide sequence ID" value="NZ_CP023699.1"/>
</dbReference>
<dbReference type="SMR" id="Q6L739"/>
<dbReference type="KEGG" id="ag:CAE46938"/>
<dbReference type="OrthoDB" id="9804264at2"/>
<dbReference type="BioCyc" id="MetaCyc:MONOMER-17185"/>
<dbReference type="BRENDA" id="2.6.1.100">
    <property type="organism ID" value="6046"/>
</dbReference>
<dbReference type="UniPathway" id="UPA00907">
    <property type="reaction ID" value="UER00922"/>
</dbReference>
<dbReference type="UniPathway" id="UPA00965"/>
<dbReference type="GO" id="GO:0030170">
    <property type="term" value="F:pyridoxal phosphate binding"/>
    <property type="evidence" value="ECO:0007669"/>
    <property type="project" value="TreeGrafter"/>
</dbReference>
<dbReference type="GO" id="GO:0008483">
    <property type="term" value="F:transaminase activity"/>
    <property type="evidence" value="ECO:0007669"/>
    <property type="project" value="UniProtKB-KW"/>
</dbReference>
<dbReference type="GO" id="GO:0017000">
    <property type="term" value="P:antibiotic biosynthetic process"/>
    <property type="evidence" value="ECO:0007669"/>
    <property type="project" value="UniProtKB-KW"/>
</dbReference>
<dbReference type="GO" id="GO:0000271">
    <property type="term" value="P:polysaccharide biosynthetic process"/>
    <property type="evidence" value="ECO:0007669"/>
    <property type="project" value="TreeGrafter"/>
</dbReference>
<dbReference type="CDD" id="cd00616">
    <property type="entry name" value="AHBA_syn"/>
    <property type="match status" value="1"/>
</dbReference>
<dbReference type="Gene3D" id="3.90.1150.10">
    <property type="entry name" value="Aspartate Aminotransferase, domain 1"/>
    <property type="match status" value="1"/>
</dbReference>
<dbReference type="Gene3D" id="3.40.640.10">
    <property type="entry name" value="Type I PLP-dependent aspartate aminotransferase-like (Major domain)"/>
    <property type="match status" value="1"/>
</dbReference>
<dbReference type="InterPro" id="IPR000653">
    <property type="entry name" value="DegT/StrS_aminotransferase"/>
</dbReference>
<dbReference type="InterPro" id="IPR015424">
    <property type="entry name" value="PyrdxlP-dep_Trfase"/>
</dbReference>
<dbReference type="InterPro" id="IPR015421">
    <property type="entry name" value="PyrdxlP-dep_Trfase_major"/>
</dbReference>
<dbReference type="InterPro" id="IPR015422">
    <property type="entry name" value="PyrdxlP-dep_Trfase_small"/>
</dbReference>
<dbReference type="PANTHER" id="PTHR30244:SF34">
    <property type="entry name" value="DTDP-4-AMINO-4,6-DIDEOXYGALACTOSE TRANSAMINASE"/>
    <property type="match status" value="1"/>
</dbReference>
<dbReference type="PANTHER" id="PTHR30244">
    <property type="entry name" value="TRANSAMINASE"/>
    <property type="match status" value="1"/>
</dbReference>
<dbReference type="Pfam" id="PF01041">
    <property type="entry name" value="DegT_DnrJ_EryC1"/>
    <property type="match status" value="1"/>
</dbReference>
<dbReference type="SUPFAM" id="SSF53383">
    <property type="entry name" value="PLP-dependent transferases"/>
    <property type="match status" value="1"/>
</dbReference>
<feature type="chain" id="PRO_0000233019" description="L-glutamine:2-deoxy-scyllo-inosose aminotransferase">
    <location>
        <begin position="1"/>
        <end position="427"/>
    </location>
</feature>
<feature type="region of interest" description="Disordered" evidence="2">
    <location>
        <begin position="1"/>
        <end position="20"/>
    </location>
</feature>
<feature type="modified residue" description="N6-(pyridoxal phosphate)lysine" evidence="1">
    <location>
        <position position="205"/>
    </location>
</feature>
<proteinExistence type="evidence at protein level"/>
<comment type="function">
    <text evidence="3 4">Catalyzes the PLP-dependent transamination of 2-deoxy-scyllo-inosose (2-DOI) to form 2-deoxy-scyllo-inosamine (2-DOIA) using L-glutamine as the amino donor. Also catalyzes the transamination of 3-amino-2,3-dideoxy-scyllo-inosose (keto-2-DOIA) into 2-deoxystreptamine (2-DOS).</text>
</comment>
<comment type="catalytic activity">
    <reaction evidence="3 4">
        <text>2-deoxy-L-scyllo-inosose + L-glutamine = 2-deoxy-scyllo-inosamine + 2-oxoglutaramate</text>
        <dbReference type="Rhea" id="RHEA:34147"/>
        <dbReference type="ChEBI" id="CHEBI:16769"/>
        <dbReference type="ChEBI" id="CHEBI:58359"/>
        <dbReference type="ChEBI" id="CHEBI:64796"/>
        <dbReference type="ChEBI" id="CHEBI:65003"/>
        <dbReference type="EC" id="2.6.1.100"/>
    </reaction>
</comment>
<comment type="catalytic activity">
    <reaction evidence="3 4">
        <text>3-amino-2,3-dideoxy-scyllo-inosose + L-glutamine = 2-deoxystreptamine + 2-oxoglutaramate</text>
        <dbReference type="Rhea" id="RHEA:34151"/>
        <dbReference type="ChEBI" id="CHEBI:16769"/>
        <dbReference type="ChEBI" id="CHEBI:58359"/>
        <dbReference type="ChEBI" id="CHEBI:65002"/>
        <dbReference type="ChEBI" id="CHEBI:65069"/>
        <dbReference type="EC" id="2.6.1.101"/>
    </reaction>
</comment>
<comment type="cofactor">
    <cofactor evidence="1">
        <name>pyridoxal 5'-phosphate</name>
        <dbReference type="ChEBI" id="CHEBI:597326"/>
    </cofactor>
</comment>
<comment type="pathway">
    <text>Metabolic intermediate biosynthesis; 2-deoxystreptamine biosynthesis; 2-deoxystreptamine from D-glucose 6-phosphate: step 2/4.</text>
</comment>
<comment type="pathway">
    <text>Antibiotic biosynthesis; kanamycin biosynthesis.</text>
</comment>
<comment type="similarity">
    <text evidence="5">Belongs to the DegT/DnrJ/EryC1 family. L-glutamine:2-deoxy-scyllo-inosose/scyllo-inosose aminotransferase subfamily.</text>
</comment>
<name>GLDSA_STRKN</name>
<protein>
    <recommendedName>
        <fullName>L-glutamine:2-deoxy-scyllo-inosose aminotransferase</fullName>
        <shortName>L-glutamine:DOI aminotransferase</shortName>
        <ecNumber evidence="3 4">2.6.1.100</ecNumber>
    </recommendedName>
    <alternativeName>
        <fullName>L-glutamine:3-amino-2,3-dideoxy-scyllo-inosose aminotransferase</fullName>
        <shortName>L-glutamine:amino-DOI aminotransferase</shortName>
        <ecNumber evidence="3 4">2.6.1.101</ecNumber>
    </alternativeName>
</protein>